<gene>
    <name type="ordered locus">PputW619_3780</name>
</gene>
<evidence type="ECO:0000255" key="1">
    <source>
        <dbReference type="HAMAP-Rule" id="MF_00434"/>
    </source>
</evidence>
<reference key="1">
    <citation type="submission" date="2008-02" db="EMBL/GenBank/DDBJ databases">
        <title>Complete sequence of Pseudomonas putida W619.</title>
        <authorList>
            <person name="Copeland A."/>
            <person name="Lucas S."/>
            <person name="Lapidus A."/>
            <person name="Barry K."/>
            <person name="Detter J.C."/>
            <person name="Glavina del Rio T."/>
            <person name="Dalin E."/>
            <person name="Tice H."/>
            <person name="Pitluck S."/>
            <person name="Chain P."/>
            <person name="Malfatti S."/>
            <person name="Shin M."/>
            <person name="Vergez L."/>
            <person name="Schmutz J."/>
            <person name="Larimer F."/>
            <person name="Land M."/>
            <person name="Hauser L."/>
            <person name="Kyrpides N."/>
            <person name="Kim E."/>
            <person name="Taghavi S."/>
            <person name="Vangronsveld D."/>
            <person name="van der Lelie D."/>
            <person name="Richardson P."/>
        </authorList>
    </citation>
    <scope>NUCLEOTIDE SEQUENCE [LARGE SCALE GENOMIC DNA]</scope>
    <source>
        <strain>W619</strain>
    </source>
</reference>
<feature type="chain" id="PRO_1000192928" description="Putative pterin-4-alpha-carbinolamine dehydratase">
    <location>
        <begin position="1"/>
        <end position="118"/>
    </location>
</feature>
<comment type="catalytic activity">
    <reaction evidence="1">
        <text>(4aS,6R)-4a-hydroxy-L-erythro-5,6,7,8-tetrahydrobiopterin = (6R)-L-erythro-6,7-dihydrobiopterin + H2O</text>
        <dbReference type="Rhea" id="RHEA:11920"/>
        <dbReference type="ChEBI" id="CHEBI:15377"/>
        <dbReference type="ChEBI" id="CHEBI:15642"/>
        <dbReference type="ChEBI" id="CHEBI:43120"/>
        <dbReference type="EC" id="4.2.1.96"/>
    </reaction>
</comment>
<comment type="similarity">
    <text evidence="1">Belongs to the pterin-4-alpha-carbinolamine dehydratase family.</text>
</comment>
<accession>B1JCI6</accession>
<sequence>MNALNQAHCEACRADAPKVTDEELAELIREIPDWNIEVRDGHMELERVFLFKNFKHALAFTNAVGEIAEAEGHHPGLLTEWGKVTVTWWSHSIKGLHRNDFIMCARTDKVAETAEGRK</sequence>
<organism>
    <name type="scientific">Pseudomonas putida (strain W619)</name>
    <dbReference type="NCBI Taxonomy" id="390235"/>
    <lineage>
        <taxon>Bacteria</taxon>
        <taxon>Pseudomonadati</taxon>
        <taxon>Pseudomonadota</taxon>
        <taxon>Gammaproteobacteria</taxon>
        <taxon>Pseudomonadales</taxon>
        <taxon>Pseudomonadaceae</taxon>
        <taxon>Pseudomonas</taxon>
    </lineage>
</organism>
<name>PHS_PSEPW</name>
<keyword id="KW-0456">Lyase</keyword>
<proteinExistence type="inferred from homology"/>
<dbReference type="EC" id="4.2.1.96" evidence="1"/>
<dbReference type="EMBL" id="CP000949">
    <property type="protein sequence ID" value="ACA74262.1"/>
    <property type="molecule type" value="Genomic_DNA"/>
</dbReference>
<dbReference type="SMR" id="B1JCI6"/>
<dbReference type="STRING" id="390235.PputW619_3780"/>
<dbReference type="KEGG" id="ppw:PputW619_3780"/>
<dbReference type="eggNOG" id="COG2154">
    <property type="taxonomic scope" value="Bacteria"/>
</dbReference>
<dbReference type="HOGENOM" id="CLU_081974_2_2_6"/>
<dbReference type="OrthoDB" id="5294615at2"/>
<dbReference type="GO" id="GO:0008124">
    <property type="term" value="F:4-alpha-hydroxytetrahydrobiopterin dehydratase activity"/>
    <property type="evidence" value="ECO:0007669"/>
    <property type="project" value="UniProtKB-UniRule"/>
</dbReference>
<dbReference type="GO" id="GO:0006729">
    <property type="term" value="P:tetrahydrobiopterin biosynthetic process"/>
    <property type="evidence" value="ECO:0007669"/>
    <property type="project" value="InterPro"/>
</dbReference>
<dbReference type="CDD" id="cd00913">
    <property type="entry name" value="PCD_DCoH_subfamily_a"/>
    <property type="match status" value="1"/>
</dbReference>
<dbReference type="Gene3D" id="3.30.1360.20">
    <property type="entry name" value="Transcriptional coactivator/pterin dehydratase"/>
    <property type="match status" value="1"/>
</dbReference>
<dbReference type="HAMAP" id="MF_00434">
    <property type="entry name" value="Pterin_4_alpha"/>
    <property type="match status" value="1"/>
</dbReference>
<dbReference type="InterPro" id="IPR036428">
    <property type="entry name" value="PCD_sf"/>
</dbReference>
<dbReference type="InterPro" id="IPR050376">
    <property type="entry name" value="Pterin-4-alpha-carb_dehyd"/>
</dbReference>
<dbReference type="InterPro" id="IPR001533">
    <property type="entry name" value="Pterin_deHydtase"/>
</dbReference>
<dbReference type="NCBIfam" id="NF002016">
    <property type="entry name" value="PRK00823.1-1"/>
    <property type="match status" value="1"/>
</dbReference>
<dbReference type="PANTHER" id="PTHR42805">
    <property type="entry name" value="PTERIN-4-ALPHA-CARBINOLAMINE DEHYDRATASE-RELATED"/>
    <property type="match status" value="1"/>
</dbReference>
<dbReference type="PANTHER" id="PTHR42805:SF1">
    <property type="entry name" value="PTERIN-4-ALPHA-CARBINOLAMINE DEHYDRATASE-RELATED"/>
    <property type="match status" value="1"/>
</dbReference>
<dbReference type="Pfam" id="PF01329">
    <property type="entry name" value="Pterin_4a"/>
    <property type="match status" value="1"/>
</dbReference>
<dbReference type="SUPFAM" id="SSF55248">
    <property type="entry name" value="PCD-like"/>
    <property type="match status" value="1"/>
</dbReference>
<protein>
    <recommendedName>
        <fullName evidence="1">Putative pterin-4-alpha-carbinolamine dehydratase</fullName>
        <shortName evidence="1">PHS</shortName>
        <ecNumber evidence="1">4.2.1.96</ecNumber>
    </recommendedName>
    <alternativeName>
        <fullName evidence="1">4-alpha-hydroxy-tetrahydropterin dehydratase</fullName>
    </alternativeName>
    <alternativeName>
        <fullName evidence="1">Pterin carbinolamine dehydratase</fullName>
        <shortName evidence="1">PCD</shortName>
    </alternativeName>
</protein>